<evidence type="ECO:0000305" key="1"/>
<organism>
    <name type="scientific">Xylella fastidiosa (strain Temecula1 / ATCC 700964)</name>
    <dbReference type="NCBI Taxonomy" id="183190"/>
    <lineage>
        <taxon>Bacteria</taxon>
        <taxon>Pseudomonadati</taxon>
        <taxon>Pseudomonadota</taxon>
        <taxon>Gammaproteobacteria</taxon>
        <taxon>Lysobacterales</taxon>
        <taxon>Lysobacteraceae</taxon>
        <taxon>Xylella</taxon>
    </lineage>
</organism>
<gene>
    <name type="ordered locus">PD_1345</name>
</gene>
<comment type="similarity">
    <text evidence="1">Belongs to the RusA family.</text>
</comment>
<feature type="chain" id="PRO_0000192010" description="Uncharacterized protein PD_1345">
    <location>
        <begin position="1"/>
        <end position="153"/>
    </location>
</feature>
<keyword id="KW-0255">Endonuclease</keyword>
<keyword id="KW-0378">Hydrolase</keyword>
<keyword id="KW-0540">Nuclease</keyword>
<keyword id="KW-1185">Reference proteome</keyword>
<reference key="1">
    <citation type="journal article" date="2003" name="J. Bacteriol.">
        <title>Comparative analyses of the complete genome sequences of Pierce's disease and citrus variegated chlorosis strains of Xylella fastidiosa.</title>
        <authorList>
            <person name="Van Sluys M.A."/>
            <person name="de Oliveira M.C."/>
            <person name="Monteiro-Vitorello C.B."/>
            <person name="Miyaki C.Y."/>
            <person name="Furlan L.R."/>
            <person name="Camargo L.E.A."/>
            <person name="da Silva A.C.R."/>
            <person name="Moon D.H."/>
            <person name="Takita M.A."/>
            <person name="Lemos E.G.M."/>
            <person name="Machado M.A."/>
            <person name="Ferro M.I.T."/>
            <person name="da Silva F.R."/>
            <person name="Goldman M.H.S."/>
            <person name="Goldman G.H."/>
            <person name="Lemos M.V.F."/>
            <person name="El-Dorry H."/>
            <person name="Tsai S.M."/>
            <person name="Carrer H."/>
            <person name="Carraro D.M."/>
            <person name="de Oliveira R.C."/>
            <person name="Nunes L.R."/>
            <person name="Siqueira W.J."/>
            <person name="Coutinho L.L."/>
            <person name="Kimura E.T."/>
            <person name="Ferro E.S."/>
            <person name="Harakava R."/>
            <person name="Kuramae E.E."/>
            <person name="Marino C.L."/>
            <person name="Giglioti E."/>
            <person name="Abreu I.L."/>
            <person name="Alves L.M.C."/>
            <person name="do Amaral A.M."/>
            <person name="Baia G.S."/>
            <person name="Blanco S.R."/>
            <person name="Brito M.S."/>
            <person name="Cannavan F.S."/>
            <person name="Celestino A.V."/>
            <person name="da Cunha A.F."/>
            <person name="Fenille R.C."/>
            <person name="Ferro J.A."/>
            <person name="Formighieri E.F."/>
            <person name="Kishi L.T."/>
            <person name="Leoni S.G."/>
            <person name="Oliveira A.R."/>
            <person name="Rosa V.E. Jr."/>
            <person name="Sassaki F.T."/>
            <person name="Sena J.A.D."/>
            <person name="de Souza A.A."/>
            <person name="Truffi D."/>
            <person name="Tsukumo F."/>
            <person name="Yanai G.M."/>
            <person name="Zaros L.G."/>
            <person name="Civerolo E.L."/>
            <person name="Simpson A.J.G."/>
            <person name="Almeida N.F. Jr."/>
            <person name="Setubal J.C."/>
            <person name="Kitajima J.P."/>
        </authorList>
    </citation>
    <scope>NUCLEOTIDE SEQUENCE [LARGE SCALE GENOMIC DNA]</scope>
    <source>
        <strain>Temecula1 / ATCC 700964</strain>
    </source>
</reference>
<dbReference type="EMBL" id="AE009442">
    <property type="protein sequence ID" value="AAO29192.1"/>
    <property type="molecule type" value="Genomic_DNA"/>
</dbReference>
<dbReference type="SMR" id="Q87BV3"/>
<dbReference type="KEGG" id="xft:PD_1345"/>
<dbReference type="HOGENOM" id="CLU_154679_0_0_6"/>
<dbReference type="Proteomes" id="UP000002516">
    <property type="component" value="Chromosome"/>
</dbReference>
<dbReference type="GO" id="GO:0004519">
    <property type="term" value="F:endonuclease activity"/>
    <property type="evidence" value="ECO:0007669"/>
    <property type="project" value="UniProtKB-KW"/>
</dbReference>
<dbReference type="GO" id="GO:0000287">
    <property type="term" value="F:magnesium ion binding"/>
    <property type="evidence" value="ECO:0007669"/>
    <property type="project" value="InterPro"/>
</dbReference>
<dbReference type="GO" id="GO:0006310">
    <property type="term" value="P:DNA recombination"/>
    <property type="evidence" value="ECO:0007669"/>
    <property type="project" value="InterPro"/>
</dbReference>
<dbReference type="GO" id="GO:0006281">
    <property type="term" value="P:DNA repair"/>
    <property type="evidence" value="ECO:0007669"/>
    <property type="project" value="InterPro"/>
</dbReference>
<dbReference type="Gene3D" id="3.30.1330.70">
    <property type="entry name" value="Holliday junction resolvase RusA"/>
    <property type="match status" value="1"/>
</dbReference>
<dbReference type="InterPro" id="IPR036614">
    <property type="entry name" value="RusA-like_sf"/>
</dbReference>
<dbReference type="SUPFAM" id="SSF103084">
    <property type="entry name" value="Holliday junction resolvase RusA"/>
    <property type="match status" value="1"/>
</dbReference>
<protein>
    <recommendedName>
        <fullName>Uncharacterized protein PD_1345</fullName>
    </recommendedName>
</protein>
<proteinExistence type="inferred from homology"/>
<accession>Q87BV3</accession>
<sequence length="153" mass="16978">MSKAMPMAACAMAGVKQMQSLTLPWPSKDLSPNARVHWTRRSKAVKQARGYAEVMARRAGWSGLSLPVEGRLDLWISFYPPTRCLPDDDNMLARFKPYRDGIADALGIDDRRFVSHPLIEDEVRHAGQVVITITGITQQASNGGPRLHAHPAF</sequence>
<name>Y1345_XYLFT</name>